<keyword id="KW-0002">3D-structure</keyword>
<keyword id="KW-0025">Alternative splicing</keyword>
<keyword id="KW-0039">Anion exchange</keyword>
<keyword id="KW-0050">Antiport</keyword>
<keyword id="KW-1003">Cell membrane</keyword>
<keyword id="KW-0868">Chloride</keyword>
<keyword id="KW-0869">Chloride channel</keyword>
<keyword id="KW-0968">Cytoplasmic vesicle</keyword>
<keyword id="KW-0256">Endoplasmic reticulum</keyword>
<keyword id="KW-0325">Glycoprotein</keyword>
<keyword id="KW-0407">Ion channel</keyword>
<keyword id="KW-0406">Ion transport</keyword>
<keyword id="KW-0472">Membrane</keyword>
<keyword id="KW-0492">Microsome</keyword>
<keyword id="KW-0597">Phosphoprotein</keyword>
<keyword id="KW-1267">Proteomics identification</keyword>
<keyword id="KW-1185">Reference proteome</keyword>
<keyword id="KW-0808">Transferase</keyword>
<keyword id="KW-0812">Transmembrane</keyword>
<keyword id="KW-1133">Transmembrane helix</keyword>
<keyword id="KW-0813">Transport</keyword>
<accession>Q9BXS9</accession>
<accession>B4DMZ1</accession>
<accession>Q548A7</accession>
<accession>Q96Q90</accession>
<accession>Q9NQU1</accession>
<name>S26A6_HUMAN</name>
<reference key="1">
    <citation type="journal article" date="2000" name="Genomics">
        <title>Mapping of five new putative anion transporter genes in human and characterization of SLC26A6, a candidate gene for pancreatic anion exchanger.</title>
        <authorList>
            <person name="Lohi H."/>
            <person name="Kujala M."/>
            <person name="Kerkelae E."/>
            <person name="Saarialho-Kere U."/>
            <person name="Kestilae M."/>
            <person name="Kere J."/>
        </authorList>
    </citation>
    <scope>NUCLEOTIDE SEQUENCE [MRNA] (ISOFORM 4)</scope>
    <scope>SUBCELLULAR LOCATION</scope>
    <scope>TISSUE SPECIFICITY</scope>
</reference>
<reference key="2">
    <citation type="journal article" date="2001" name="Genomics">
        <title>Cloning and characterization of SLC26A6, a novel member of the solute carrier 26 gene family.</title>
        <authorList>
            <person name="Waldegger S."/>
            <person name="Moschen I."/>
            <person name="Ramirez A."/>
            <person name="Smith R.J.H."/>
            <person name="Ayadi H."/>
            <person name="Lang F."/>
            <person name="Kubisch C."/>
        </authorList>
    </citation>
    <scope>NUCLEOTIDE SEQUENCE [MRNA] (ISOFORM 1)</scope>
    <scope>TISSUE SPECIFICITY</scope>
    <scope>SUBCELLULAR LOCATION</scope>
    <scope>VARIANT MET-206</scope>
</reference>
<reference key="3">
    <citation type="journal article" date="2002" name="Am. J. Physiol.">
        <title>Molecular characterization of the murine Slc26a6 anion exchanger: functional comparison with Slc26a1.</title>
        <authorList>
            <person name="Xie Q."/>
            <person name="Welch R."/>
            <person name="Mercado A."/>
            <person name="Romero M.F."/>
            <person name="Mount D.B."/>
        </authorList>
    </citation>
    <scope>NUCLEOTIDE SEQUENCE [MRNA] (ISOFORM 3)</scope>
</reference>
<reference key="4">
    <citation type="submission" date="1999-10" db="EMBL/GenBank/DDBJ databases">
        <title>Molecular cloning of a new putative sulfate anion transporter.</title>
        <authorList>
            <person name="Ishibashi K."/>
        </authorList>
    </citation>
    <scope>NUCLEOTIDE SEQUENCE [MRNA] (ISOFORM 2)</scope>
    <source>
        <tissue>Kidney</tissue>
    </source>
</reference>
<reference key="5">
    <citation type="journal article" date="2004" name="Nat. Genet.">
        <title>Complete sequencing and characterization of 21,243 full-length human cDNAs.</title>
        <authorList>
            <person name="Ota T."/>
            <person name="Suzuki Y."/>
            <person name="Nishikawa T."/>
            <person name="Otsuki T."/>
            <person name="Sugiyama T."/>
            <person name="Irie R."/>
            <person name="Wakamatsu A."/>
            <person name="Hayashi K."/>
            <person name="Sato H."/>
            <person name="Nagai K."/>
            <person name="Kimura K."/>
            <person name="Makita H."/>
            <person name="Sekine M."/>
            <person name="Obayashi M."/>
            <person name="Nishi T."/>
            <person name="Shibahara T."/>
            <person name="Tanaka T."/>
            <person name="Ishii S."/>
            <person name="Yamamoto J."/>
            <person name="Saito K."/>
            <person name="Kawai Y."/>
            <person name="Isono Y."/>
            <person name="Nakamura Y."/>
            <person name="Nagahari K."/>
            <person name="Murakami K."/>
            <person name="Yasuda T."/>
            <person name="Iwayanagi T."/>
            <person name="Wagatsuma M."/>
            <person name="Shiratori A."/>
            <person name="Sudo H."/>
            <person name="Hosoiri T."/>
            <person name="Kaku Y."/>
            <person name="Kodaira H."/>
            <person name="Kondo H."/>
            <person name="Sugawara M."/>
            <person name="Takahashi M."/>
            <person name="Kanda K."/>
            <person name="Yokoi T."/>
            <person name="Furuya T."/>
            <person name="Kikkawa E."/>
            <person name="Omura Y."/>
            <person name="Abe K."/>
            <person name="Kamihara K."/>
            <person name="Katsuta N."/>
            <person name="Sato K."/>
            <person name="Tanikawa M."/>
            <person name="Yamazaki M."/>
            <person name="Ninomiya K."/>
            <person name="Ishibashi T."/>
            <person name="Yamashita H."/>
            <person name="Murakawa K."/>
            <person name="Fujimori K."/>
            <person name="Tanai H."/>
            <person name="Kimata M."/>
            <person name="Watanabe M."/>
            <person name="Hiraoka S."/>
            <person name="Chiba Y."/>
            <person name="Ishida S."/>
            <person name="Ono Y."/>
            <person name="Takiguchi S."/>
            <person name="Watanabe S."/>
            <person name="Yosida M."/>
            <person name="Hotuta T."/>
            <person name="Kusano J."/>
            <person name="Kanehori K."/>
            <person name="Takahashi-Fujii A."/>
            <person name="Hara H."/>
            <person name="Tanase T.-O."/>
            <person name="Nomura Y."/>
            <person name="Togiya S."/>
            <person name="Komai F."/>
            <person name="Hara R."/>
            <person name="Takeuchi K."/>
            <person name="Arita M."/>
            <person name="Imose N."/>
            <person name="Musashino K."/>
            <person name="Yuuki H."/>
            <person name="Oshima A."/>
            <person name="Sasaki N."/>
            <person name="Aotsuka S."/>
            <person name="Yoshikawa Y."/>
            <person name="Matsunawa H."/>
            <person name="Ichihara T."/>
            <person name="Shiohata N."/>
            <person name="Sano S."/>
            <person name="Moriya S."/>
            <person name="Momiyama H."/>
            <person name="Satoh N."/>
            <person name="Takami S."/>
            <person name="Terashima Y."/>
            <person name="Suzuki O."/>
            <person name="Nakagawa S."/>
            <person name="Senoh A."/>
            <person name="Mizoguchi H."/>
            <person name="Goto Y."/>
            <person name="Shimizu F."/>
            <person name="Wakebe H."/>
            <person name="Hishigaki H."/>
            <person name="Watanabe T."/>
            <person name="Sugiyama A."/>
            <person name="Takemoto M."/>
            <person name="Kawakami B."/>
            <person name="Yamazaki M."/>
            <person name="Watanabe K."/>
            <person name="Kumagai A."/>
            <person name="Itakura S."/>
            <person name="Fukuzumi Y."/>
            <person name="Fujimori Y."/>
            <person name="Komiyama M."/>
            <person name="Tashiro H."/>
            <person name="Tanigami A."/>
            <person name="Fujiwara T."/>
            <person name="Ono T."/>
            <person name="Yamada K."/>
            <person name="Fujii Y."/>
            <person name="Ozaki K."/>
            <person name="Hirao M."/>
            <person name="Ohmori Y."/>
            <person name="Kawabata A."/>
            <person name="Hikiji T."/>
            <person name="Kobatake N."/>
            <person name="Inagaki H."/>
            <person name="Ikema Y."/>
            <person name="Okamoto S."/>
            <person name="Okitani R."/>
            <person name="Kawakami T."/>
            <person name="Noguchi S."/>
            <person name="Itoh T."/>
            <person name="Shigeta K."/>
            <person name="Senba T."/>
            <person name="Matsumura K."/>
            <person name="Nakajima Y."/>
            <person name="Mizuno T."/>
            <person name="Morinaga M."/>
            <person name="Sasaki M."/>
            <person name="Togashi T."/>
            <person name="Oyama M."/>
            <person name="Hata H."/>
            <person name="Watanabe M."/>
            <person name="Komatsu T."/>
            <person name="Mizushima-Sugano J."/>
            <person name="Satoh T."/>
            <person name="Shirai Y."/>
            <person name="Takahashi Y."/>
            <person name="Nakagawa K."/>
            <person name="Okumura K."/>
            <person name="Nagase T."/>
            <person name="Nomura N."/>
            <person name="Kikuchi H."/>
            <person name="Masuho Y."/>
            <person name="Yamashita R."/>
            <person name="Nakai K."/>
            <person name="Yada T."/>
            <person name="Nakamura Y."/>
            <person name="Ohara O."/>
            <person name="Isogai T."/>
            <person name="Sugano S."/>
        </authorList>
    </citation>
    <scope>NUCLEOTIDE SEQUENCE [LARGE SCALE MRNA] (ISOFORM 7)</scope>
    <source>
        <tissue>Lung</tissue>
    </source>
</reference>
<reference key="6">
    <citation type="journal article" date="2006" name="Nature">
        <title>The DNA sequence, annotation and analysis of human chromosome 3.</title>
        <authorList>
            <person name="Muzny D.M."/>
            <person name="Scherer S.E."/>
            <person name="Kaul R."/>
            <person name="Wang J."/>
            <person name="Yu J."/>
            <person name="Sudbrak R."/>
            <person name="Buhay C.J."/>
            <person name="Chen R."/>
            <person name="Cree A."/>
            <person name="Ding Y."/>
            <person name="Dugan-Rocha S."/>
            <person name="Gill R."/>
            <person name="Gunaratne P."/>
            <person name="Harris R.A."/>
            <person name="Hawes A.C."/>
            <person name="Hernandez J."/>
            <person name="Hodgson A.V."/>
            <person name="Hume J."/>
            <person name="Jackson A."/>
            <person name="Khan Z.M."/>
            <person name="Kovar-Smith C."/>
            <person name="Lewis L.R."/>
            <person name="Lozado R.J."/>
            <person name="Metzker M.L."/>
            <person name="Milosavljevic A."/>
            <person name="Miner G.R."/>
            <person name="Morgan M.B."/>
            <person name="Nazareth L.V."/>
            <person name="Scott G."/>
            <person name="Sodergren E."/>
            <person name="Song X.-Z."/>
            <person name="Steffen D."/>
            <person name="Wei S."/>
            <person name="Wheeler D.A."/>
            <person name="Wright M.W."/>
            <person name="Worley K.C."/>
            <person name="Yuan Y."/>
            <person name="Zhang Z."/>
            <person name="Adams C.Q."/>
            <person name="Ansari-Lari M.A."/>
            <person name="Ayele M."/>
            <person name="Brown M.J."/>
            <person name="Chen G."/>
            <person name="Chen Z."/>
            <person name="Clendenning J."/>
            <person name="Clerc-Blankenburg K.P."/>
            <person name="Chen R."/>
            <person name="Chen Z."/>
            <person name="Davis C."/>
            <person name="Delgado O."/>
            <person name="Dinh H.H."/>
            <person name="Dong W."/>
            <person name="Draper H."/>
            <person name="Ernst S."/>
            <person name="Fu G."/>
            <person name="Gonzalez-Garay M.L."/>
            <person name="Garcia D.K."/>
            <person name="Gillett W."/>
            <person name="Gu J."/>
            <person name="Hao B."/>
            <person name="Haugen E."/>
            <person name="Havlak P."/>
            <person name="He X."/>
            <person name="Hennig S."/>
            <person name="Hu S."/>
            <person name="Huang W."/>
            <person name="Jackson L.R."/>
            <person name="Jacob L.S."/>
            <person name="Kelly S.H."/>
            <person name="Kube M."/>
            <person name="Levy R."/>
            <person name="Li Z."/>
            <person name="Liu B."/>
            <person name="Liu J."/>
            <person name="Liu W."/>
            <person name="Lu J."/>
            <person name="Maheshwari M."/>
            <person name="Nguyen B.-V."/>
            <person name="Okwuonu G.O."/>
            <person name="Palmeiri A."/>
            <person name="Pasternak S."/>
            <person name="Perez L.M."/>
            <person name="Phelps K.A."/>
            <person name="Plopper F.J."/>
            <person name="Qiang B."/>
            <person name="Raymond C."/>
            <person name="Rodriguez R."/>
            <person name="Saenphimmachak C."/>
            <person name="Santibanez J."/>
            <person name="Shen H."/>
            <person name="Shen Y."/>
            <person name="Subramanian S."/>
            <person name="Tabor P.E."/>
            <person name="Verduzco D."/>
            <person name="Waldron L."/>
            <person name="Wang J."/>
            <person name="Wang J."/>
            <person name="Wang Q."/>
            <person name="Williams G.A."/>
            <person name="Wong G.K.-S."/>
            <person name="Yao Z."/>
            <person name="Zhang J."/>
            <person name="Zhang X."/>
            <person name="Zhao G."/>
            <person name="Zhou J."/>
            <person name="Zhou Y."/>
            <person name="Nelson D."/>
            <person name="Lehrach H."/>
            <person name="Reinhardt R."/>
            <person name="Naylor S.L."/>
            <person name="Yang H."/>
            <person name="Olson M."/>
            <person name="Weinstock G."/>
            <person name="Gibbs R.A."/>
        </authorList>
    </citation>
    <scope>NUCLEOTIDE SEQUENCE [LARGE SCALE GENOMIC DNA]</scope>
</reference>
<reference key="7">
    <citation type="submission" date="2005-07" db="EMBL/GenBank/DDBJ databases">
        <authorList>
            <person name="Mural R.J."/>
            <person name="Istrail S."/>
            <person name="Sutton G.G."/>
            <person name="Florea L."/>
            <person name="Halpern A.L."/>
            <person name="Mobarry C.M."/>
            <person name="Lippert R."/>
            <person name="Walenz B."/>
            <person name="Shatkay H."/>
            <person name="Dew I."/>
            <person name="Miller J.R."/>
            <person name="Flanigan M.J."/>
            <person name="Edwards N.J."/>
            <person name="Bolanos R."/>
            <person name="Fasulo D."/>
            <person name="Halldorsson B.V."/>
            <person name="Hannenhalli S."/>
            <person name="Turner R."/>
            <person name="Yooseph S."/>
            <person name="Lu F."/>
            <person name="Nusskern D.R."/>
            <person name="Shue B.C."/>
            <person name="Zheng X.H."/>
            <person name="Zhong F."/>
            <person name="Delcher A.L."/>
            <person name="Huson D.H."/>
            <person name="Kravitz S.A."/>
            <person name="Mouchard L."/>
            <person name="Reinert K."/>
            <person name="Remington K.A."/>
            <person name="Clark A.G."/>
            <person name="Waterman M.S."/>
            <person name="Eichler E.E."/>
            <person name="Adams M.D."/>
            <person name="Hunkapiller M.W."/>
            <person name="Myers E.W."/>
            <person name="Venter J.C."/>
        </authorList>
    </citation>
    <scope>NUCLEOTIDE SEQUENCE [LARGE SCALE GENOMIC DNA]</scope>
</reference>
<reference key="8">
    <citation type="journal article" date="2004" name="Genome Res.">
        <title>The status, quality, and expansion of the NIH full-length cDNA project: the Mammalian Gene Collection (MGC).</title>
        <authorList>
            <consortium name="The MGC Project Team"/>
        </authorList>
    </citation>
    <scope>NUCLEOTIDE SEQUENCE [LARGE SCALE MRNA] (ISOFORMS 1 AND 3)</scope>
    <source>
        <tissue>Duodenum</tissue>
    </source>
</reference>
<reference key="9">
    <citation type="journal article" date="2003" name="Am. J. Physiol.">
        <title>Isoforms of SLC26A6 mediate anion transport and have functional PDZ interaction domains.</title>
        <authorList>
            <person name="Lohi H."/>
            <person name="Lamprecht G."/>
            <person name="Markovich D."/>
            <person name="Heil A."/>
            <person name="Kujala M."/>
            <person name="Seidler U."/>
            <person name="Kere J."/>
        </authorList>
    </citation>
    <scope>ALTERNATIVE SPLICING (ISOFORMS 4; 5 AND 6)</scope>
    <scope>FUNCTION</scope>
    <scope>ACTIVITY REGULATION</scope>
    <scope>INTERACTION WITH NHERF1 AND NHERF2</scope>
    <scope>SUBCELLULAR LOCATION</scope>
    <scope>TOPOLOGY</scope>
    <scope>TRANSPORTER ACTIVITY</scope>
    <scope>TISSUE SPECIFICITY</scope>
</reference>
<reference key="10">
    <citation type="journal article" date="2005" name="EMBO J.">
        <title>Metabolon disruption: a mechanism that regulates bicarbonate transport.</title>
        <authorList>
            <person name="Alvarez B.V."/>
            <person name="Vilas G.L."/>
            <person name="Casey J.R."/>
        </authorList>
    </citation>
    <scope>FUNCTION (ISOFORM 4)</scope>
    <scope>ACTIVITY REGULATION</scope>
    <scope>INTERACTION WITH CA2</scope>
    <scope>PHOSPHORYLATION AT SER-553 AND SER-582 BY PKC (ISOFORM 4)</scope>
    <scope>SUBCELLULAR LOCATION</scope>
    <scope>MUTAGENESIS OF 547-ASP--ASP-549; SER-553 AND SER-582 (ISOFORM 4)</scope>
    <scope>TRANSPORTER ACTIVITY</scope>
</reference>
<reference key="11">
    <citation type="journal article" date="2006" name="Cell">
        <title>Global, in vivo, and site-specific phosphorylation dynamics in signaling networks.</title>
        <authorList>
            <person name="Olsen J.V."/>
            <person name="Blagoev B."/>
            <person name="Gnad F."/>
            <person name="Macek B."/>
            <person name="Kumar C."/>
            <person name="Mortensen P."/>
            <person name="Mann M."/>
        </authorList>
    </citation>
    <scope>PHOSPHORYLATION [LARGE SCALE ANALYSIS] AT SER-752</scope>
    <scope>IDENTIFICATION BY MASS SPECTROMETRY [LARGE SCALE ANALYSIS]</scope>
    <source>
        <tissue>Cervix carcinoma</tissue>
    </source>
</reference>
<reference key="12">
    <citation type="journal article" date="2008" name="J. Cell. Biochem.">
        <title>Characterization of the 5'-flanking region and regulation of expression of human anion exchanger SLC26A6.</title>
        <authorList>
            <person name="Saksena S."/>
            <person name="Dwivedi A."/>
            <person name="Singla A."/>
            <person name="Gill R.K."/>
            <person name="Tyagi S."/>
            <person name="Borthakur A."/>
            <person name="Alrefai W.A."/>
            <person name="Ramaswamy K."/>
            <person name="Dudeja P.K."/>
        </authorList>
    </citation>
    <scope>INDUCTION</scope>
</reference>
<reference key="13">
    <citation type="journal article" date="2009" name="Am. J. Physiol.">
        <title>Parsing apical oxalate exchange in Caco-2BBe1 monolayers: siRNA knockdown of SLC26A6 reveals the role and properties of PAT-1.</title>
        <authorList>
            <person name="Freel R.W."/>
            <person name="Morozumi M."/>
            <person name="Hatch M."/>
        </authorList>
    </citation>
    <scope>FUNCTION</scope>
    <scope>ACTIVITY REGULATION</scope>
    <scope>TRANSPORTER ACTIVITY</scope>
    <scope>SUBCELLULAR LOCATION</scope>
</reference>
<reference key="14">
    <citation type="journal article" date="2009" name="Sci. Signal.">
        <title>Quantitative phosphoproteomic analysis of T cell receptor signaling reveals system-wide modulation of protein-protein interactions.</title>
        <authorList>
            <person name="Mayya V."/>
            <person name="Lundgren D.H."/>
            <person name="Hwang S.-I."/>
            <person name="Rezaul K."/>
            <person name="Wu L."/>
            <person name="Eng J.K."/>
            <person name="Rodionov V."/>
            <person name="Han D.K."/>
        </authorList>
    </citation>
    <scope>IDENTIFICATION BY MASS SPECTROMETRY [LARGE SCALE ANALYSIS]</scope>
    <source>
        <tissue>Leukemic T-cell</tissue>
    </source>
</reference>
<reference key="15">
    <citation type="journal article" date="2010" name="Sci. Signal.">
        <title>Quantitative phosphoproteomics reveals widespread full phosphorylation site occupancy during mitosis.</title>
        <authorList>
            <person name="Olsen J.V."/>
            <person name="Vermeulen M."/>
            <person name="Santamaria A."/>
            <person name="Kumar C."/>
            <person name="Miller M.L."/>
            <person name="Jensen L.J."/>
            <person name="Gnad F."/>
            <person name="Cox J."/>
            <person name="Jensen T.S."/>
            <person name="Nigg E.A."/>
            <person name="Brunak S."/>
            <person name="Mann M."/>
        </authorList>
    </citation>
    <scope>PHOSPHORYLATION [LARGE SCALE ANALYSIS] AT SER-616; SER-752 AND SER-755</scope>
    <scope>IDENTIFICATION BY MASS SPECTROMETRY [LARGE SCALE ANALYSIS]</scope>
    <source>
        <tissue>Cervix carcinoma</tissue>
    </source>
</reference>
<reference key="16">
    <citation type="journal article" date="2016" name="Am. J. Physiol.">
        <title>N-glycosylation critically regulates function of oxalate transporter SLC26A6.</title>
        <authorList>
            <person name="Thomson R.B."/>
            <person name="Thomson C.L."/>
            <person name="Aronson P.S."/>
        </authorList>
    </citation>
    <scope>FUNCTION</scope>
    <scope>TRANSPORTER ACTIVITY</scope>
    <scope>GLYCOSYLATION AT ASN-167 AND ASN-172</scope>
    <scope>SUBCELLULAR LOCATION</scope>
    <scope>MUTAGENESIS OF ASN-167 AND ASN-172</scope>
</reference>
<comment type="function">
    <text evidence="1 10 11">Apical membrane anion-exchanger with wide epithelial distribution that plays a role as a component of the pH buffering system for maintaining acid-base homeostasis. Acts as a versatile DIDS-sensitive inorganic and organic anion transporter that mediates the uptake of monovalent anions like chloride, bicarbonate, formate and hydroxyl ion and divalent anions like sulfate and oxalate. Functions in multiple exchange modes involving pairs of these anions, which include chloride-bicarbonate, chloride-oxalate, oxalate-formate, oxalate-sulfate and chloride-formate exchange. Apical membrane chloride-bicarbonate exchanger that mediates luminal chloride absorption and bicarbonate secretion by the small intestinal brush border membrane and contributes to intracellular pH regulation in the duodenal upper villous epithelium during proton-coupled peptide absorption, possibly by providing a bicarbonate import pathway. Also mediates intestinal chloride absorption and oxalate secretion, thereby preventing hyperoxaluria and calcium oxalate urolithiasis. Transepithelial oxalate secretion, chloride-formate, chloride-oxalate and chloride-bicarbonate transport activities in the duodenum are inhibited by PKC activation in a calcium-independent manner. The apical membrane chloride-bicarbonate exchanger also provides a major route for fluid and bicarbonate secretion into the proximal tubules of the kidney as well as into the proximal part of the interlobular pancreatic ductal tree, where it mediates electrogenic chloride-bicarbonate exchange with a chloride-bicarbonate stoichiometry of 1:2, and hence will dilute and alkalinize protein-rich acinar secretion. Also mediates the transcellular sulfate absorption and oxalate secretion across the apical membrane in the duodenum and the formate ion efflux at the apical brush border of cells in the proximal tubules of kidney. Plays a role in sperm capacitation by increasing intracellular pH.</text>
</comment>
<comment type="function">
    <molecule>Isoform 4</molecule>
    <text evidence="8">Apical membrane chloride-bicarbonate exchanger. Its association with carbonic anhydrase CA2 forms a bicarbonate transport metabolon; hence maximizes the local concentration of bicarbonate at the transporter site.</text>
</comment>
<comment type="catalytic activity">
    <reaction evidence="10">
        <text>2 hydrogencarbonate(in) + chloride(out) = 2 hydrogencarbonate(out) + chloride(in)</text>
        <dbReference type="Rhea" id="RHEA:72207"/>
        <dbReference type="ChEBI" id="CHEBI:17544"/>
        <dbReference type="ChEBI" id="CHEBI:17996"/>
    </reaction>
</comment>
<comment type="catalytic activity">
    <reaction evidence="10 11">
        <text>oxalate(in) + chloride(out) = oxalate(out) + chloride(in)</text>
        <dbReference type="Rhea" id="RHEA:72263"/>
        <dbReference type="ChEBI" id="CHEBI:17996"/>
        <dbReference type="ChEBI" id="CHEBI:30623"/>
    </reaction>
</comment>
<comment type="catalytic activity">
    <reaction evidence="1">
        <text>oxalate(in) + formate(out) = oxalate(out) + formate(in)</text>
        <dbReference type="Rhea" id="RHEA:72271"/>
        <dbReference type="ChEBI" id="CHEBI:15740"/>
        <dbReference type="ChEBI" id="CHEBI:30623"/>
    </reaction>
</comment>
<comment type="catalytic activity">
    <reaction evidence="1">
        <text>oxalate(in) + sulfate(out) = oxalate(out) + sulfate(in)</text>
        <dbReference type="Rhea" id="RHEA:72275"/>
        <dbReference type="ChEBI" id="CHEBI:16189"/>
        <dbReference type="ChEBI" id="CHEBI:30623"/>
    </reaction>
</comment>
<comment type="catalytic activity">
    <molecule>Isoform 4</molecule>
    <reaction evidence="7 8">
        <text>2 hydrogencarbonate(in) + chloride(out) = 2 hydrogencarbonate(out) + chloride(in)</text>
        <dbReference type="Rhea" id="RHEA:72207"/>
        <dbReference type="ChEBI" id="CHEBI:17544"/>
        <dbReference type="ChEBI" id="CHEBI:17996"/>
    </reaction>
</comment>
<comment type="catalytic activity">
    <molecule>Isoform 4</molecule>
    <reaction evidence="7">
        <text>2 hydrogencarbonate(out) + sulfate(in) = 2 hydrogencarbonate(in) + sulfate(out)</text>
        <dbReference type="Rhea" id="RHEA:72387"/>
        <dbReference type="ChEBI" id="CHEBI:16189"/>
        <dbReference type="ChEBI" id="CHEBI:17544"/>
    </reaction>
</comment>
<comment type="catalytic activity">
    <molecule>Isoform 5</molecule>
    <reaction evidence="7">
        <text>2 hydrogencarbonate(in) + chloride(out) = 2 hydrogencarbonate(out) + chloride(in)</text>
        <dbReference type="Rhea" id="RHEA:72207"/>
        <dbReference type="ChEBI" id="CHEBI:17544"/>
        <dbReference type="ChEBI" id="CHEBI:17996"/>
    </reaction>
</comment>
<comment type="catalytic activity">
    <molecule>Isoform 5</molecule>
    <reaction evidence="7">
        <text>2 hydrogencarbonate(out) + sulfate(in) = 2 hydrogencarbonate(in) + sulfate(out)</text>
        <dbReference type="Rhea" id="RHEA:72387"/>
        <dbReference type="ChEBI" id="CHEBI:16189"/>
        <dbReference type="ChEBI" id="CHEBI:17544"/>
    </reaction>
</comment>
<comment type="catalytic activity">
    <molecule>Isoform 6</molecule>
    <reaction evidence="7">
        <text>2 hydrogencarbonate(in) + chloride(out) = 2 hydrogencarbonate(out) + chloride(in)</text>
        <dbReference type="Rhea" id="RHEA:72207"/>
        <dbReference type="ChEBI" id="CHEBI:17544"/>
        <dbReference type="ChEBI" id="CHEBI:17996"/>
    </reaction>
</comment>
<comment type="catalytic activity">
    <molecule>Isoform 6</molecule>
    <reaction evidence="7">
        <text>2 hydrogencarbonate(out) + sulfate(in) = 2 hydrogencarbonate(in) + sulfate(out)</text>
        <dbReference type="Rhea" id="RHEA:72387"/>
        <dbReference type="ChEBI" id="CHEBI:16189"/>
        <dbReference type="ChEBI" id="CHEBI:17544"/>
    </reaction>
</comment>
<comment type="activity regulation">
    <text evidence="10">Oxalate transport activity is inhibited by 4,4'-diisothiocyanatostilbene-2,2'-disulfonic acid (DIDS).</text>
</comment>
<comment type="activity regulation">
    <molecule>Isoform 4</molecule>
    <text evidence="7 8">Chloride, bicarbonate and sulfate transport activities are inhibited by 4,4'-diisothiocyanatostilbene-2,2'-disulfonic acid (DIDS).</text>
</comment>
<comment type="activity regulation">
    <molecule>Isoform 5</molecule>
    <text evidence="7">Chloride, bicarbonate and sulfate transport activities are inhibited by 4,4'-diisothiocyanatostilbene-2,2'-disulfonic acid (DIDS).</text>
</comment>
<comment type="activity regulation">
    <molecule>Isoform 6</molecule>
    <text evidence="7">Chloride, bicarbonate and sulfate transport activities are inhibited by 4,4'-diisothiocyanatostilbene-2,2'-disulfonic acid (DIDS).</text>
</comment>
<comment type="subunit">
    <text evidence="1">Interacts (via C-terminal domain) with PDZK1 (via C-terminal PDZ domain); the interaction induces chloride and oxalate exchange transport. Interacts with CFTR and SLC26A3 (By similarity). Interacts with AHCYL1; the interaction increases SLC26A6 activity (By similarity).</text>
</comment>
<comment type="subunit">
    <molecule>Isoform 4</molecule>
    <text evidence="7 8">Interacts with NHERF1 (via the PDZ domains) and NHERF2 (via the PDZ domains) (PubMed:12444019). Interacts (via C-terminal cytoplasmic domain) with CA2; the interaction stimulates chloride-bicarbonate exchange activity (PubMed:15990874).</text>
</comment>
<comment type="subunit">
    <molecule>Isoform 5</molecule>
    <text evidence="7">Interacts with NHERF1 (via the PDZ domains) and NHERF2 (via the PDZ domains).</text>
</comment>
<comment type="interaction">
    <interactant intactId="EBI-12814225">
        <id>Q9BXS9-3</id>
    </interactant>
    <interactant intactId="EBI-4290634">
        <id>Q9BQE5</id>
        <label>APOL2</label>
    </interactant>
    <organismsDiffer>false</organismsDiffer>
    <experiments>3</experiments>
</comment>
<comment type="interaction">
    <interactant intactId="EBI-12814225">
        <id>Q9BXS9-3</id>
    </interactant>
    <interactant intactId="EBI-12701138">
        <id>P41181</id>
        <label>AQP2</label>
    </interactant>
    <organismsDiffer>false</organismsDiffer>
    <experiments>3</experiments>
</comment>
<comment type="interaction">
    <interactant intactId="EBI-12814225">
        <id>Q9BXS9-3</id>
    </interactant>
    <interactant intactId="EBI-749204">
        <id>O15155</id>
        <label>BET1</label>
    </interactant>
    <organismsDiffer>false</organismsDiffer>
    <experiments>3</experiments>
</comment>
<comment type="interaction">
    <interactant intactId="EBI-12814225">
        <id>Q9BXS9-3</id>
    </interactant>
    <interactant intactId="EBI-712921">
        <id>P60033</id>
        <label>CD81</label>
    </interactant>
    <organismsDiffer>false</organismsDiffer>
    <experiments>3</experiments>
</comment>
<comment type="interaction">
    <interactant intactId="EBI-12814225">
        <id>Q9BXS9-3</id>
    </interactant>
    <interactant intactId="EBI-711490">
        <id>Q9UKR5</id>
        <label>ERG28</label>
    </interactant>
    <organismsDiffer>false</organismsDiffer>
    <experiments>3</experiments>
</comment>
<comment type="interaction">
    <interactant intactId="EBI-12814225">
        <id>Q9BXS9-3</id>
    </interactant>
    <interactant intactId="EBI-8070286">
        <id>O43561-2</id>
        <label>LAT</label>
    </interactant>
    <organismsDiffer>false</organismsDiffer>
    <experiments>3</experiments>
</comment>
<comment type="interaction">
    <interactant intactId="EBI-12814225">
        <id>Q9BXS9-3</id>
    </interactant>
    <interactant intactId="EBI-12188331">
        <id>P60201-2</id>
        <label>PLP1</label>
    </interactant>
    <organismsDiffer>false</organismsDiffer>
    <experiments>3</experiments>
</comment>
<comment type="interaction">
    <interactant intactId="EBI-12814225">
        <id>Q9BXS9-3</id>
    </interactant>
    <interactant intactId="EBI-12814225">
        <id>Q9BXS9-3</id>
        <label>SLC26A6</label>
    </interactant>
    <organismsDiffer>false</organismsDiffer>
    <experiments>3</experiments>
</comment>
<comment type="interaction">
    <interactant intactId="EBI-12814225">
        <id>Q9BXS9-3</id>
    </interactant>
    <interactant intactId="EBI-11957067">
        <id>Q6UX34</id>
        <label>SNORC</label>
    </interactant>
    <organismsDiffer>false</organismsDiffer>
    <experiments>3</experiments>
</comment>
<comment type="interaction">
    <interactant intactId="EBI-12814225">
        <id>Q9BXS9-3</id>
    </interactant>
    <interactant intactId="EBI-714319">
        <id>P02787</id>
        <label>TF</label>
    </interactant>
    <organismsDiffer>false</organismsDiffer>
    <experiments>3</experiments>
</comment>
<comment type="interaction">
    <interactant intactId="EBI-12814225">
        <id>Q9BXS9-3</id>
    </interactant>
    <interactant intactId="EBI-10694905">
        <id>Q5BJH2-2</id>
        <label>TMEM128</label>
    </interactant>
    <organismsDiffer>false</organismsDiffer>
    <experiments>3</experiments>
</comment>
<comment type="interaction">
    <interactant intactId="EBI-12814225">
        <id>Q9BXS9-3</id>
    </interactant>
    <interactant intactId="EBI-11994282">
        <id>Q5SNT2-2</id>
        <label>TMEM201</label>
    </interactant>
    <organismsDiffer>false</organismsDiffer>
    <experiments>3</experiments>
</comment>
<comment type="subcellular location">
    <subcellularLocation>
        <location evidence="6 11">Cell membrane</location>
        <topology evidence="2">Multi-pass membrane protein</topology>
    </subcellularLocation>
    <subcellularLocation>
        <location evidence="10">Apical cell membrane</location>
        <topology evidence="2">Multi-pass membrane protein</topology>
    </subcellularLocation>
    <subcellularLocation>
        <location evidence="1">Cytoplasmic vesicle membrane</location>
        <topology evidence="2">Multi-pass membrane protein</topology>
    </subcellularLocation>
    <subcellularLocation>
        <location evidence="1">Microsome</location>
    </subcellularLocation>
    <text evidence="1">Localized in sperm membranes. Colocalizes with CFTR at the midpiece of sperm tail. Localizes to the apical membrane brush border of epithelial cells in the proximal tubules of kidney, of enterocytes of the small intestine and of gastric parietal cells in the stomach.</text>
</comment>
<comment type="subcellular location">
    <molecule>Isoform 4</molecule>
    <subcellularLocation>
        <location evidence="7 8">Cell membrane</location>
        <topology evidence="2">Multi-pass membrane protein</topology>
    </subcellularLocation>
    <subcellularLocation>
        <location evidence="5">Apical cell membrane</location>
        <topology evidence="2">Multi-pass membrane protein</topology>
    </subcellularLocation>
    <subcellularLocation>
        <location evidence="5">Basolateral cell membrane</location>
        <topology evidence="2">Multi-pass membrane protein</topology>
    </subcellularLocation>
    <text evidence="5 8">Localizes to the apical and basolateral surfaces of tubular wall cells in kidney and in the brush border of pancreatic duct cells (PubMed:11087667). Colocalized with CA2 at the surface of the cell membrane in order to form a bicarbonate transport metabolon; colocalization is reduced in phorbol myristate acetate (PMA)-induced cells (PubMed:15990874). May be translocated from the cytosolic surface of the cell membrane to the intracellular space by PKC in phorbol myristate acetate (PMA)-induced cells (PubMed:15990874).</text>
</comment>
<comment type="subcellular location">
    <molecule>Isoform 5</molecule>
    <subcellularLocation>
        <location evidence="7">Cell membrane</location>
        <topology evidence="2">Multi-pass membrane protein</topology>
    </subcellularLocation>
</comment>
<comment type="subcellular location">
    <molecule>Isoform 6</molecule>
    <subcellularLocation>
        <location evidence="7">Cell membrane</location>
        <topology evidence="2">Multi-pass membrane protein</topology>
    </subcellularLocation>
</comment>
<comment type="alternative products">
    <event type="alternative splicing"/>
    <isoform>
        <id>Q9BXS9-1</id>
        <name>1</name>
        <name>SLC26A6b</name>
        <sequence type="displayed"/>
    </isoform>
    <isoform>
        <id>Q9BXS9-2</id>
        <name>2</name>
        <sequence type="described" ref="VSP_006169"/>
    </isoform>
    <isoform>
        <id>Q9BXS9-3</id>
        <name>3</name>
        <sequence type="described" ref="VSP_040127"/>
    </isoform>
    <isoform>
        <id>Q9BXS9-4</id>
        <name>4</name>
        <name evidence="14">SLC26A6a</name>
        <sequence type="described" ref="VSP_046807 VSP_040127"/>
    </isoform>
    <isoform>
        <id>Q9BXS9-5</id>
        <name>5</name>
        <name evidence="14">SLC26A6c</name>
        <sequence type="described" ref="VSP_046807 VSP_047851 VSP_040127"/>
    </isoform>
    <isoform>
        <id>Q9BXS9-6</id>
        <name>6</name>
        <name evidence="14">SLC26A6d</name>
        <sequence type="described" ref="VSP_046807 VSP_047852"/>
    </isoform>
    <isoform>
        <id>Q9BXS9-7</id>
        <name>7</name>
        <sequence type="described" ref="VSP_055273 VSP_055274"/>
    </isoform>
</comment>
<comment type="tissue specificity">
    <text evidence="5 6">Ubiquitous. Highest levels in kidney and pancreas. Lower expression in heart, skeletal muscle, liver and placenta. Also found in lung and brain.</text>
</comment>
<comment type="tissue specificity">
    <molecule>Isoform 4</molecule>
    <text evidence="5 7">Ubiquitously expressed. Highest levels expressed in the kidney and pancreas.</text>
</comment>
<comment type="tissue specificity">
    <molecule>Isoform 5</molecule>
    <text evidence="7">Expressed weakly in placenta, lung, liver and pancreas.</text>
</comment>
<comment type="tissue specificity">
    <molecule>Isoform 6</molecule>
    <text evidence="7">Expressed in heart, brain, placenta, lung, liver, kidney, pancreas, spleen, thymus, prostate, testis and ovary.</text>
</comment>
<comment type="induction">
    <text evidence="9">Down-regulated by pro-inflammatory cytokine IFN gamma.</text>
</comment>
<comment type="PTM">
    <molecule>Isoform 4</molecule>
    <text evidence="8">Phosphorylated on serine residues by PKC; the phosphorylation disrupts interaction with carbonic anhydrase CA2 and reduces bicarbonate transport activity in a phorbol myristate acetate (PMA)-induced manner.</text>
</comment>
<comment type="PTM">
    <text evidence="11">Glycosylation at Asn-167 and Asn-172 positively regulates its chloride oxalate exchanger activity.</text>
</comment>
<comment type="similarity">
    <text evidence="18">Belongs to the SLC26A/SulP transporter (TC 2.A.53) family.</text>
</comment>
<gene>
    <name type="primary">SLC26A6</name>
</gene>
<sequence length="759" mass="82967">MGLADASGPRDTQALLSATQAMDLRRRDYHMERPLLNQEHLEELGRWGSAPRTHQWRTWLQCSRARAYALLLQHLPVLVWLPRYPVRDWLLGDLLSGLSVAIMQLPQGLAYALLAGLPPVFGLYSSFYPVFIYFLFGTSRHISVGTFAVMSVMVGSVTESLAPQALNDSMINETARDAARVQVASTLSVLVGLFQVGLGLIHFGFVVTYLSEPLVRGYTTAAAVQVFVSQLKYVFGLHLSSHSGPLSLIYTVLEVCWKLPQSKVGTVVTAAVAGVVLVVVKLLNDKLQQQLPMPIPGELLTLIGATGISYGMGLKHRFEVDVVGNIPAGLVPPVAPNTQLFSKLVGSAFTIAVVGFAIAISLGKIFALRHGYRVDSNQELVALGLSNLIGGIFQCFPVSCSMSRSLVQESTGGNSQVAGAISSLFILLIIVKLGELFHDLPKAVLAAIIIVNLKGMLRQLSDMRSLWKANRADLLIWLVTFTATILLNLDLGLVVAVIFSLLLVVVRTQMPHYSVLGQVPDTDIYRDVAEYSEAKEVRGVKVFRSSATVYFANAEFYSDALKQRCGVDVDFLISQKKKLLKKQEQLKLKQLQKEEKLRKQAASPKGASVSINVNTSLEDMRSNNVEDCKMMQVSSGDKMEDATANGQEDSKAPDGSTLKALGLPQPDFHSLILDLGALSFVDTVCLKSLKNIFHDFREIEVEVYMAACHSPVVSQLEAGHFFDASITKKHLFASVHDAVTFALQHPRPVPDSPVSVTRL</sequence>
<evidence type="ECO:0000250" key="1">
    <source>
        <dbReference type="UniProtKB" id="Q8CIW6"/>
    </source>
</evidence>
<evidence type="ECO:0000255" key="2"/>
<evidence type="ECO:0000255" key="3">
    <source>
        <dbReference type="PROSITE-ProRule" id="PRU00198"/>
    </source>
</evidence>
<evidence type="ECO:0000256" key="4">
    <source>
        <dbReference type="SAM" id="MobiDB-lite"/>
    </source>
</evidence>
<evidence type="ECO:0000269" key="5">
    <source>
    </source>
</evidence>
<evidence type="ECO:0000269" key="6">
    <source>
    </source>
</evidence>
<evidence type="ECO:0000269" key="7">
    <source>
    </source>
</evidence>
<evidence type="ECO:0000269" key="8">
    <source>
    </source>
</evidence>
<evidence type="ECO:0000269" key="9">
    <source>
    </source>
</evidence>
<evidence type="ECO:0000269" key="10">
    <source>
    </source>
</evidence>
<evidence type="ECO:0000269" key="11">
    <source>
    </source>
</evidence>
<evidence type="ECO:0000303" key="12">
    <source>
    </source>
</evidence>
<evidence type="ECO:0000303" key="13">
    <source>
    </source>
</evidence>
<evidence type="ECO:0000303" key="14">
    <source>
    </source>
</evidence>
<evidence type="ECO:0000303" key="15">
    <source>
    </source>
</evidence>
<evidence type="ECO:0000303" key="16">
    <source>
    </source>
</evidence>
<evidence type="ECO:0000303" key="17">
    <source ref="4"/>
</evidence>
<evidence type="ECO:0000305" key="18"/>
<evidence type="ECO:0000305" key="19">
    <source>
    </source>
</evidence>
<evidence type="ECO:0007744" key="20">
    <source>
    </source>
</evidence>
<evidence type="ECO:0007744" key="21">
    <source>
    </source>
</evidence>
<evidence type="ECO:0007829" key="22">
    <source>
        <dbReference type="PDB" id="8OPQ"/>
    </source>
</evidence>
<feature type="chain" id="PRO_0000080171" description="Solute carrier family 26 member 6">
    <location>
        <begin position="1"/>
        <end position="759"/>
    </location>
</feature>
<feature type="topological domain" description="Cytoplasmic" evidence="2">
    <location>
        <begin position="1"/>
        <end position="115"/>
    </location>
</feature>
<feature type="transmembrane region" description="Helical" evidence="2">
    <location>
        <begin position="116"/>
        <end position="136"/>
    </location>
</feature>
<feature type="topological domain" description="Extracellular" evidence="2">
    <location>
        <begin position="137"/>
        <end position="186"/>
    </location>
</feature>
<feature type="transmembrane region" description="Helical" evidence="2">
    <location>
        <begin position="187"/>
        <end position="207"/>
    </location>
</feature>
<feature type="topological domain" description="Cytoplasmic" evidence="2">
    <location>
        <begin position="208"/>
        <end position="263"/>
    </location>
</feature>
<feature type="transmembrane region" description="Helical" evidence="2">
    <location>
        <begin position="264"/>
        <end position="284"/>
    </location>
</feature>
<feature type="topological domain" description="Extracellular" evidence="2">
    <location>
        <begin position="285"/>
        <end position="293"/>
    </location>
</feature>
<feature type="transmembrane region" description="Helical" evidence="2">
    <location>
        <begin position="294"/>
        <end position="314"/>
    </location>
</feature>
<feature type="topological domain" description="Cytoplasmic" evidence="2">
    <location>
        <begin position="315"/>
        <end position="347"/>
    </location>
</feature>
<feature type="transmembrane region" description="Helical" evidence="2">
    <location>
        <begin position="348"/>
        <end position="368"/>
    </location>
</feature>
<feature type="topological domain" description="Extracellular" evidence="2">
    <location>
        <begin position="369"/>
        <end position="379"/>
    </location>
</feature>
<feature type="transmembrane region" description="Helical" evidence="2">
    <location>
        <begin position="380"/>
        <end position="400"/>
    </location>
</feature>
<feature type="topological domain" description="Cytoplasmic" evidence="2">
    <location>
        <begin position="401"/>
        <end position="416"/>
    </location>
</feature>
<feature type="transmembrane region" description="Helical" evidence="2">
    <location>
        <begin position="417"/>
        <end position="437"/>
    </location>
</feature>
<feature type="topological domain" description="Extracellular" evidence="2">
    <location>
        <begin position="438"/>
        <end position="484"/>
    </location>
</feature>
<feature type="transmembrane region" description="Helical" evidence="2">
    <location>
        <begin position="485"/>
        <end position="505"/>
    </location>
</feature>
<feature type="topological domain" description="Cytoplasmic" evidence="2">
    <location>
        <begin position="506"/>
        <end position="759"/>
    </location>
</feature>
<feature type="domain" description="STAS" evidence="3">
    <location>
        <begin position="530"/>
        <end position="742"/>
    </location>
</feature>
<feature type="region of interest" description="Disordered" evidence="4">
    <location>
        <begin position="636"/>
        <end position="657"/>
    </location>
</feature>
<feature type="modified residue" description="Phosphoserine" evidence="21">
    <location>
        <position position="616"/>
    </location>
</feature>
<feature type="modified residue" description="Phosphoserine" evidence="20 21">
    <location>
        <position position="752"/>
    </location>
</feature>
<feature type="modified residue" description="Phosphoserine" evidence="21">
    <location>
        <position position="755"/>
    </location>
</feature>
<feature type="glycosylation site" description="N-linked (GlcNAc) asparagine" evidence="11">
    <location>
        <position position="167"/>
    </location>
</feature>
<feature type="glycosylation site" description="N-linked (GlcNAc) asparagine" evidence="11">
    <location>
        <position position="172"/>
    </location>
</feature>
<feature type="splice variant" id="VSP_046807" description="In isoform 4, isoform 5 and isoform 6." evidence="12">
    <location>
        <begin position="1"/>
        <end position="21"/>
    </location>
</feature>
<feature type="splice variant" id="VSP_055273" description="In isoform 7." evidence="15">
    <original>GTFAVMSVMVGSVTESLAPQALNDSMINETARDAARVQVASTLSVLVGLFQVGLGLIHFGFVVTYLSEPLVR</original>
    <variation>ATPGPLPLLTAPGRPTGGAGPDPLRLRGHLPVRTSCPRLYHSCSCAGLRLTAQVCVWPPSEQPLWATVPHLL</variation>
    <location>
        <begin position="145"/>
        <end position="216"/>
    </location>
</feature>
<feature type="splice variant" id="VSP_055274" description="In isoform 7." evidence="15">
    <location>
        <begin position="217"/>
        <end position="252"/>
    </location>
</feature>
<feature type="splice variant" id="VSP_047851" description="In isoform 5." evidence="18">
    <location>
        <begin position="264"/>
        <end position="301"/>
    </location>
</feature>
<feature type="splice variant" id="VSP_006169" description="In isoform 2." evidence="17">
    <original>ASPKGASVSINVNTSLEDMRSNNVEDCKMM</original>
    <variation>GPLLSACLAPQ</variation>
    <location>
        <begin position="602"/>
        <end position="631"/>
    </location>
</feature>
<feature type="splice variant" id="VSP_047852" description="In isoform 6." evidence="18">
    <original>QVSSGDKMEDATANGQEDSKAPDGSTLKALGLPQPDFHSLILDLGALSFVDTVCLKSLKNIFHDFREIEVEVYMAACHSPVVSQLEAGHFFDASITKKHLFASVHDAVTFALQHPRPVPDSPVSVTRL</original>
    <variation>VRLEVGKEVTAVSCRDAGSTCLMRNAMDPAAVGSRVLRRWQEEWGGWVRYSSGSVVICHRI</variation>
    <location>
        <begin position="632"/>
        <end position="759"/>
    </location>
</feature>
<feature type="splice variant" id="VSP_040127" description="In isoform 3, isoform 4 and isoform 5." evidence="12 13 16">
    <location>
        <position position="632"/>
    </location>
</feature>
<feature type="sequence variant" id="VAR_012776" description="In dbSNP:rs13324142." evidence="6">
    <original>V</original>
    <variation>M</variation>
    <location>
        <position position="206"/>
    </location>
</feature>
<feature type="mutagenesis site" description="Reduced chloride oxalate exchanger activity." evidence="11">
    <original>N</original>
    <variation>Q</variation>
    <location>
        <position position="167"/>
    </location>
</feature>
<feature type="mutagenesis site" description="Reduced chloride oxalate exchanger activity." evidence="11">
    <original>N</original>
    <variation>Q</variation>
    <location>
        <position position="172"/>
    </location>
</feature>
<feature type="helix" evidence="22">
    <location>
        <begin position="38"/>
        <end position="45"/>
    </location>
</feature>
<feature type="helix" evidence="22">
    <location>
        <begin position="64"/>
        <end position="74"/>
    </location>
</feature>
<feature type="helix" evidence="22">
    <location>
        <begin position="77"/>
        <end position="80"/>
    </location>
</feature>
<feature type="helix" evidence="22">
    <location>
        <begin position="86"/>
        <end position="115"/>
    </location>
</feature>
<feature type="helix" evidence="22">
    <location>
        <begin position="119"/>
        <end position="125"/>
    </location>
</feature>
<feature type="helix" evidence="22">
    <location>
        <begin position="128"/>
        <end position="136"/>
    </location>
</feature>
<feature type="helix" evidence="22">
    <location>
        <begin position="148"/>
        <end position="161"/>
    </location>
</feature>
<feature type="strand" evidence="22">
    <location>
        <begin position="166"/>
        <end position="168"/>
    </location>
</feature>
<feature type="helix" evidence="22">
    <location>
        <begin position="171"/>
        <end position="200"/>
    </location>
</feature>
<feature type="helix" evidence="22">
    <location>
        <begin position="206"/>
        <end position="209"/>
    </location>
</feature>
<feature type="helix" evidence="22">
    <location>
        <begin position="212"/>
        <end position="235"/>
    </location>
</feature>
<feature type="helix" evidence="22">
    <location>
        <begin position="247"/>
        <end position="257"/>
    </location>
</feature>
<feature type="helix" evidence="22">
    <location>
        <begin position="259"/>
        <end position="261"/>
    </location>
</feature>
<feature type="helix" evidence="22">
    <location>
        <begin position="264"/>
        <end position="286"/>
    </location>
</feature>
<feature type="turn" evidence="22">
    <location>
        <begin position="287"/>
        <end position="290"/>
    </location>
</feature>
<feature type="strand" evidence="22">
    <location>
        <begin position="291"/>
        <end position="293"/>
    </location>
</feature>
<feature type="helix" evidence="22">
    <location>
        <begin position="297"/>
        <end position="312"/>
    </location>
</feature>
<feature type="helix" evidence="22">
    <location>
        <begin position="314"/>
        <end position="318"/>
    </location>
</feature>
<feature type="helix" evidence="22">
    <location>
        <begin position="338"/>
        <end position="340"/>
    </location>
</feature>
<feature type="helix" evidence="22">
    <location>
        <begin position="341"/>
        <end position="370"/>
    </location>
</feature>
<feature type="helix" evidence="22">
    <location>
        <begin position="376"/>
        <end position="392"/>
    </location>
</feature>
<feature type="helix" evidence="22">
    <location>
        <begin position="402"/>
        <end position="411"/>
    </location>
</feature>
<feature type="helix" evidence="22">
    <location>
        <begin position="416"/>
        <end position="431"/>
    </location>
</feature>
<feature type="turn" evidence="22">
    <location>
        <begin position="432"/>
        <end position="434"/>
    </location>
</feature>
<feature type="helix" evidence="22">
    <location>
        <begin position="435"/>
        <end position="437"/>
    </location>
</feature>
<feature type="helix" evidence="22">
    <location>
        <begin position="442"/>
        <end position="451"/>
    </location>
</feature>
<feature type="helix" evidence="22">
    <location>
        <begin position="454"/>
        <end position="469"/>
    </location>
</feature>
<feature type="helix" evidence="22">
    <location>
        <begin position="471"/>
        <end position="486"/>
    </location>
</feature>
<feature type="helix" evidence="22">
    <location>
        <begin position="488"/>
        <end position="508"/>
    </location>
</feature>
<feature type="strand" evidence="22">
    <location>
        <begin position="514"/>
        <end position="518"/>
    </location>
</feature>
<feature type="strand" evidence="22">
    <location>
        <begin position="525"/>
        <end position="527"/>
    </location>
</feature>
<feature type="turn" evidence="22">
    <location>
        <begin position="528"/>
        <end position="530"/>
    </location>
</feature>
<feature type="strand" evidence="22">
    <location>
        <begin position="531"/>
        <end position="533"/>
    </location>
</feature>
<feature type="strand" evidence="22">
    <location>
        <begin position="540"/>
        <end position="544"/>
    </location>
</feature>
<feature type="turn" evidence="22">
    <location>
        <begin position="551"/>
        <end position="553"/>
    </location>
</feature>
<feature type="helix" evidence="22">
    <location>
        <begin position="554"/>
        <end position="564"/>
    </location>
</feature>
<feature type="helix" evidence="22">
    <location>
        <begin position="569"/>
        <end position="593"/>
    </location>
</feature>
<feature type="helix" evidence="22">
    <location>
        <begin position="658"/>
        <end position="661"/>
    </location>
</feature>
<feature type="strand" evidence="22">
    <location>
        <begin position="669"/>
        <end position="674"/>
    </location>
</feature>
<feature type="helix" evidence="22">
    <location>
        <begin position="683"/>
        <end position="698"/>
    </location>
</feature>
<feature type="strand" evidence="22">
    <location>
        <begin position="702"/>
        <end position="706"/>
    </location>
</feature>
<feature type="helix" evidence="22">
    <location>
        <begin position="710"/>
        <end position="718"/>
    </location>
</feature>
<feature type="strand" evidence="22">
    <location>
        <begin position="724"/>
        <end position="726"/>
    </location>
</feature>
<feature type="helix" evidence="22">
    <location>
        <begin position="728"/>
        <end position="730"/>
    </location>
</feature>
<feature type="strand" evidence="22">
    <location>
        <begin position="731"/>
        <end position="734"/>
    </location>
</feature>
<feature type="helix" evidence="22">
    <location>
        <begin position="735"/>
        <end position="744"/>
    </location>
</feature>
<feature type="modified residue" description="Phosphoserine; by PKC" evidence="19">
    <location sequence="Q9BXS9-4">
        <position position="553"/>
    </location>
</feature>
<feature type="modified residue" description="Phosphoserine; by PKC" evidence="19">
    <location sequence="Q9BXS9-4">
        <position position="582"/>
    </location>
</feature>
<feature type="mutagenesis site" description="Does not inhibit cell membrane localization. Inhibits interaction with CA2 and bicarbonate transport." evidence="8">
    <original>DVD</original>
    <variation>NVN</variation>
    <location sequence="Q9BXS9-4">
        <begin position="547"/>
        <end position="549"/>
    </location>
</feature>
<feature type="mutagenesis site" description="Does not inhibit interaction with CA2. Inhibits interaction with CA2 and bicarbonate transport in PMA-induced cells." evidence="8">
    <original>S</original>
    <variation>A</variation>
    <location sequence="Q9BXS9-4">
        <position position="553"/>
    </location>
</feature>
<feature type="mutagenesis site" description="Does not inhibit interaction with CA2. Does not inhibit interaction with CA2 and bicarbonate transport in PMA-induced cells." evidence="8">
    <original>S</original>
    <variation>A</variation>
    <location sequence="Q9BXS9-4">
        <position position="582"/>
    </location>
</feature>
<organism>
    <name type="scientific">Homo sapiens</name>
    <name type="common">Human</name>
    <dbReference type="NCBI Taxonomy" id="9606"/>
    <lineage>
        <taxon>Eukaryota</taxon>
        <taxon>Metazoa</taxon>
        <taxon>Chordata</taxon>
        <taxon>Craniata</taxon>
        <taxon>Vertebrata</taxon>
        <taxon>Euteleostomi</taxon>
        <taxon>Mammalia</taxon>
        <taxon>Eutheria</taxon>
        <taxon>Euarchontoglires</taxon>
        <taxon>Primates</taxon>
        <taxon>Haplorrhini</taxon>
        <taxon>Catarrhini</taxon>
        <taxon>Hominidae</taxon>
        <taxon>Homo</taxon>
    </lineage>
</organism>
<protein>
    <recommendedName>
        <fullName>Solute carrier family 26 member 6</fullName>
    </recommendedName>
    <alternativeName>
        <fullName>Anion exchange transporter</fullName>
    </alternativeName>
    <alternativeName>
        <fullName>Pendrin-like protein 1</fullName>
        <shortName>Pendrin-L1</shortName>
    </alternativeName>
</protein>
<proteinExistence type="evidence at protein level"/>
<dbReference type="EMBL" id="AF279265">
    <property type="protein sequence ID" value="AAF81911.1"/>
    <property type="molecule type" value="mRNA"/>
</dbReference>
<dbReference type="EMBL" id="AF288410">
    <property type="protein sequence ID" value="AAK19153.1"/>
    <property type="molecule type" value="mRNA"/>
</dbReference>
<dbReference type="EMBL" id="AF416721">
    <property type="protein sequence ID" value="AAN07094.1"/>
    <property type="molecule type" value="mRNA"/>
</dbReference>
<dbReference type="EMBL" id="AB033288">
    <property type="protein sequence ID" value="BAB69041.1"/>
    <property type="molecule type" value="mRNA"/>
</dbReference>
<dbReference type="EMBL" id="AK297695">
    <property type="protein sequence ID" value="BAG60053.1"/>
    <property type="molecule type" value="mRNA"/>
</dbReference>
<dbReference type="EMBL" id="AC121252">
    <property type="status" value="NOT_ANNOTATED_CDS"/>
    <property type="molecule type" value="Genomic_DNA"/>
</dbReference>
<dbReference type="EMBL" id="CH471055">
    <property type="protein sequence ID" value="EAW64901.1"/>
    <property type="molecule type" value="Genomic_DNA"/>
</dbReference>
<dbReference type="EMBL" id="CH471055">
    <property type="protein sequence ID" value="EAW64903.1"/>
    <property type="molecule type" value="Genomic_DNA"/>
</dbReference>
<dbReference type="EMBL" id="BC017697">
    <property type="protein sequence ID" value="AAH17697.1"/>
    <property type="molecule type" value="mRNA"/>
</dbReference>
<dbReference type="CCDS" id="CCDS43087.1">
    <molecule id="Q9BXS9-1"/>
</dbReference>
<dbReference type="CCDS" id="CCDS46824.1">
    <molecule id="Q9BXS9-2"/>
</dbReference>
<dbReference type="CCDS" id="CCDS46825.1">
    <molecule id="Q9BXS9-3"/>
</dbReference>
<dbReference type="CCDS" id="CCDS63628.1">
    <molecule id="Q9BXS9-7"/>
</dbReference>
<dbReference type="RefSeq" id="NP_001035544.1">
    <property type="nucleotide sequence ID" value="NM_001040454.1"/>
</dbReference>
<dbReference type="RefSeq" id="NP_001268661.1">
    <molecule id="Q9BXS9-7"/>
    <property type="nucleotide sequence ID" value="NM_001281732.2"/>
</dbReference>
<dbReference type="RefSeq" id="NP_001268662.1">
    <property type="nucleotide sequence ID" value="NM_001281733.1"/>
</dbReference>
<dbReference type="RefSeq" id="NP_075062.2">
    <molecule id="Q9BXS9-1"/>
    <property type="nucleotide sequence ID" value="NM_022911.3"/>
</dbReference>
<dbReference type="RefSeq" id="NP_599025.2">
    <molecule id="Q9BXS9-3"/>
    <property type="nucleotide sequence ID" value="NM_134263.3"/>
</dbReference>
<dbReference type="RefSeq" id="NP_602298.2">
    <molecule id="Q9BXS9-2"/>
    <property type="nucleotide sequence ID" value="NM_134426.3"/>
</dbReference>
<dbReference type="PDB" id="8OPQ">
    <property type="method" value="EM"/>
    <property type="resolution" value="3.28 A"/>
    <property type="chains" value="A/B=2-759"/>
</dbReference>
<dbReference type="PDBsum" id="8OPQ"/>
<dbReference type="EMDB" id="EMD-17085"/>
<dbReference type="SMR" id="Q9BXS9"/>
<dbReference type="BioGRID" id="122373">
    <property type="interactions" value="85"/>
</dbReference>
<dbReference type="FunCoup" id="Q9BXS9">
    <property type="interactions" value="553"/>
</dbReference>
<dbReference type="IntAct" id="Q9BXS9">
    <property type="interactions" value="56"/>
</dbReference>
<dbReference type="STRING" id="9606.ENSP00000378920"/>
<dbReference type="BindingDB" id="Q9BXS9"/>
<dbReference type="ChEMBL" id="CHEMBL5465351"/>
<dbReference type="TCDB" id="2.A.53.2.7">
    <property type="family name" value="the sulfate permease (sulp) family"/>
</dbReference>
<dbReference type="GlyGen" id="Q9BXS9">
    <property type="glycosylation" value="2 sites"/>
</dbReference>
<dbReference type="iPTMnet" id="Q9BXS9"/>
<dbReference type="PhosphoSitePlus" id="Q9BXS9"/>
<dbReference type="SwissPalm" id="Q9BXS9"/>
<dbReference type="BioMuta" id="SLC26A6"/>
<dbReference type="DMDM" id="20140224"/>
<dbReference type="jPOST" id="Q9BXS9"/>
<dbReference type="MassIVE" id="Q9BXS9"/>
<dbReference type="PaxDb" id="9606-ENSP00000378920"/>
<dbReference type="PeptideAtlas" id="Q9BXS9"/>
<dbReference type="ProteomicsDB" id="4656"/>
<dbReference type="ProteomicsDB" id="79499">
    <molecule id="Q9BXS9-1"/>
</dbReference>
<dbReference type="ProteomicsDB" id="79500">
    <molecule id="Q9BXS9-2"/>
</dbReference>
<dbReference type="ProteomicsDB" id="79501">
    <molecule id="Q9BXS9-3"/>
</dbReference>
<dbReference type="ProteomicsDB" id="82188"/>
<dbReference type="Pumba" id="Q9BXS9"/>
<dbReference type="Antibodypedia" id="30187">
    <property type="antibodies" value="201 antibodies from 26 providers"/>
</dbReference>
<dbReference type="DNASU" id="65010"/>
<dbReference type="Ensembl" id="ENST00000383733.7">
    <molecule id="Q9BXS9-2"/>
    <property type="protein sequence ID" value="ENSP00000373239.3"/>
    <property type="gene ID" value="ENSG00000225697.13"/>
</dbReference>
<dbReference type="Ensembl" id="ENST00000395550.7">
    <molecule id="Q9BXS9-1"/>
    <property type="protein sequence ID" value="ENSP00000378920.2"/>
    <property type="gene ID" value="ENSG00000225697.13"/>
</dbReference>
<dbReference type="Ensembl" id="ENST00000420764.6">
    <molecule id="Q9BXS9-3"/>
    <property type="protein sequence ID" value="ENSP00000404684.2"/>
    <property type="gene ID" value="ENSG00000225697.13"/>
</dbReference>
<dbReference type="Ensembl" id="ENST00000455886.6">
    <molecule id="Q9BXS9-7"/>
    <property type="protein sequence ID" value="ENSP00000401066.2"/>
    <property type="gene ID" value="ENSG00000225697.13"/>
</dbReference>
<dbReference type="GeneID" id="65010"/>
<dbReference type="KEGG" id="hsa:65010"/>
<dbReference type="MANE-Select" id="ENST00000395550.7">
    <property type="protein sequence ID" value="ENSP00000378920.2"/>
    <property type="RefSeq nucleotide sequence ID" value="NM_022911.3"/>
    <property type="RefSeq protein sequence ID" value="NP_075062.2"/>
</dbReference>
<dbReference type="UCSC" id="uc003cug.4">
    <molecule id="Q9BXS9-1"/>
    <property type="organism name" value="human"/>
</dbReference>
<dbReference type="AGR" id="HGNC:14472"/>
<dbReference type="CTD" id="65010"/>
<dbReference type="DisGeNET" id="65010"/>
<dbReference type="GeneCards" id="SLC26A6"/>
<dbReference type="HGNC" id="HGNC:14472">
    <property type="gene designation" value="SLC26A6"/>
</dbReference>
<dbReference type="HPA" id="ENSG00000225697">
    <property type="expression patterns" value="Low tissue specificity"/>
</dbReference>
<dbReference type="MalaCards" id="SLC26A6"/>
<dbReference type="MIM" id="610068">
    <property type="type" value="gene"/>
</dbReference>
<dbReference type="neXtProt" id="NX_Q9BXS9"/>
<dbReference type="OpenTargets" id="ENSG00000225697"/>
<dbReference type="PharmGKB" id="PA37889"/>
<dbReference type="VEuPathDB" id="HostDB:ENSG00000225697"/>
<dbReference type="eggNOG" id="KOG0236">
    <property type="taxonomic scope" value="Eukaryota"/>
</dbReference>
<dbReference type="GeneTree" id="ENSGT01070000253775"/>
<dbReference type="HOGENOM" id="CLU_003182_9_4_1"/>
<dbReference type="InParanoid" id="Q9BXS9"/>
<dbReference type="OMA" id="KFMMALQ"/>
<dbReference type="OrthoDB" id="288203at2759"/>
<dbReference type="PAN-GO" id="Q9BXS9">
    <property type="GO annotations" value="6 GO annotations based on evolutionary models"/>
</dbReference>
<dbReference type="PhylomeDB" id="Q9BXS9"/>
<dbReference type="TreeFam" id="TF313784"/>
<dbReference type="PathwayCommons" id="Q9BXS9"/>
<dbReference type="Reactome" id="R-HSA-427601">
    <property type="pathway name" value="Multifunctional anion exchangers"/>
</dbReference>
<dbReference type="SignaLink" id="Q9BXS9"/>
<dbReference type="BioGRID-ORCS" id="65010">
    <property type="hits" value="15 hits in 1155 CRISPR screens"/>
</dbReference>
<dbReference type="ChiTaRS" id="SLC26A6">
    <property type="organism name" value="human"/>
</dbReference>
<dbReference type="GeneWiki" id="SLC26A6"/>
<dbReference type="GenomeRNAi" id="65010"/>
<dbReference type="Pharos" id="Q9BXS9">
    <property type="development level" value="Tbio"/>
</dbReference>
<dbReference type="PRO" id="PR:Q9BXS9"/>
<dbReference type="Proteomes" id="UP000005640">
    <property type="component" value="Chromosome 3"/>
</dbReference>
<dbReference type="RNAct" id="Q9BXS9">
    <property type="molecule type" value="protein"/>
</dbReference>
<dbReference type="Bgee" id="ENSG00000225697">
    <property type="expression patterns" value="Expressed in mucosa of transverse colon and 107 other cell types or tissues"/>
</dbReference>
<dbReference type="ExpressionAtlas" id="Q9BXS9">
    <property type="expression patterns" value="baseline and differential"/>
</dbReference>
<dbReference type="GO" id="GO:0016324">
    <property type="term" value="C:apical plasma membrane"/>
    <property type="evidence" value="ECO:0000314"/>
    <property type="project" value="UniProtKB"/>
</dbReference>
<dbReference type="GO" id="GO:0016323">
    <property type="term" value="C:basolateral plasma membrane"/>
    <property type="evidence" value="ECO:0000314"/>
    <property type="project" value="UniProtKB"/>
</dbReference>
<dbReference type="GO" id="GO:0031526">
    <property type="term" value="C:brush border membrane"/>
    <property type="evidence" value="ECO:0000314"/>
    <property type="project" value="UniProtKB"/>
</dbReference>
<dbReference type="GO" id="GO:0034707">
    <property type="term" value="C:chloride channel complex"/>
    <property type="evidence" value="ECO:0007669"/>
    <property type="project" value="UniProtKB-KW"/>
</dbReference>
<dbReference type="GO" id="GO:0030659">
    <property type="term" value="C:cytoplasmic vesicle membrane"/>
    <property type="evidence" value="ECO:0007669"/>
    <property type="project" value="UniProtKB-SubCell"/>
</dbReference>
<dbReference type="GO" id="GO:0005829">
    <property type="term" value="C:cytosol"/>
    <property type="evidence" value="ECO:0000314"/>
    <property type="project" value="HPA"/>
</dbReference>
<dbReference type="GO" id="GO:0005783">
    <property type="term" value="C:endoplasmic reticulum"/>
    <property type="evidence" value="ECO:0007669"/>
    <property type="project" value="UniProtKB-KW"/>
</dbReference>
<dbReference type="GO" id="GO:0016020">
    <property type="term" value="C:membrane"/>
    <property type="evidence" value="ECO:0000314"/>
    <property type="project" value="UniProtKB"/>
</dbReference>
<dbReference type="GO" id="GO:0005886">
    <property type="term" value="C:plasma membrane"/>
    <property type="evidence" value="ECO:0000314"/>
    <property type="project" value="HPA"/>
</dbReference>
<dbReference type="GO" id="GO:0097225">
    <property type="term" value="C:sperm midpiece"/>
    <property type="evidence" value="ECO:0000250"/>
    <property type="project" value="UniProtKB"/>
</dbReference>
<dbReference type="GO" id="GO:0031982">
    <property type="term" value="C:vesicle"/>
    <property type="evidence" value="ECO:0000250"/>
    <property type="project" value="UniProtKB"/>
</dbReference>
<dbReference type="GO" id="GO:0012506">
    <property type="term" value="C:vesicle membrane"/>
    <property type="evidence" value="ECO:0000250"/>
    <property type="project" value="UniProtKB"/>
</dbReference>
<dbReference type="GO" id="GO:0015106">
    <property type="term" value="F:bicarbonate transmembrane transporter activity"/>
    <property type="evidence" value="ECO:0000314"/>
    <property type="project" value="UniProtKB"/>
</dbReference>
<dbReference type="GO" id="GO:0005254">
    <property type="term" value="F:chloride channel activity"/>
    <property type="evidence" value="ECO:0007669"/>
    <property type="project" value="UniProtKB-KW"/>
</dbReference>
<dbReference type="GO" id="GO:0015108">
    <property type="term" value="F:chloride transmembrane transporter activity"/>
    <property type="evidence" value="ECO:0000314"/>
    <property type="project" value="UniProtKB"/>
</dbReference>
<dbReference type="GO" id="GO:0140900">
    <property type="term" value="F:chloride:bicarbonate antiporter activity"/>
    <property type="evidence" value="ECO:0000314"/>
    <property type="project" value="UniProtKB"/>
</dbReference>
<dbReference type="GO" id="GO:0015562">
    <property type="term" value="F:efflux transmembrane transporter activity"/>
    <property type="evidence" value="ECO:0000250"/>
    <property type="project" value="UniProtKB"/>
</dbReference>
<dbReference type="GO" id="GO:0015499">
    <property type="term" value="F:formate transmembrane transporter activity"/>
    <property type="evidence" value="ECO:0000250"/>
    <property type="project" value="UniProtKB"/>
</dbReference>
<dbReference type="GO" id="GO:0042802">
    <property type="term" value="F:identical protein binding"/>
    <property type="evidence" value="ECO:0000353"/>
    <property type="project" value="IntAct"/>
</dbReference>
<dbReference type="GO" id="GO:0019531">
    <property type="term" value="F:oxalate transmembrane transporter activity"/>
    <property type="evidence" value="ECO:0000318"/>
    <property type="project" value="GO_Central"/>
</dbReference>
<dbReference type="GO" id="GO:0030165">
    <property type="term" value="F:PDZ domain binding"/>
    <property type="evidence" value="ECO:0000250"/>
    <property type="project" value="UniProtKB"/>
</dbReference>
<dbReference type="GO" id="GO:0008271">
    <property type="term" value="F:secondary active sulfate transmembrane transporter activity"/>
    <property type="evidence" value="ECO:0007669"/>
    <property type="project" value="InterPro"/>
</dbReference>
<dbReference type="GO" id="GO:0005452">
    <property type="term" value="F:solute:inorganic anion antiporter activity"/>
    <property type="evidence" value="ECO:0000314"/>
    <property type="project" value="UniProtKB"/>
</dbReference>
<dbReference type="GO" id="GO:0015116">
    <property type="term" value="F:sulfate transmembrane transporter activity"/>
    <property type="evidence" value="ECO:0000314"/>
    <property type="project" value="UniProtKB"/>
</dbReference>
<dbReference type="GO" id="GO:0015383">
    <property type="term" value="F:sulfate:bicarbonate antiporter activity"/>
    <property type="evidence" value="ECO:0000314"/>
    <property type="project" value="UniProtKB"/>
</dbReference>
<dbReference type="GO" id="GO:0016740">
    <property type="term" value="F:transferase activity"/>
    <property type="evidence" value="ECO:0007669"/>
    <property type="project" value="UniProtKB-KW"/>
</dbReference>
<dbReference type="GO" id="GO:0038166">
    <property type="term" value="P:angiotensin-activated signaling pathway"/>
    <property type="evidence" value="ECO:0000314"/>
    <property type="project" value="UniProtKB"/>
</dbReference>
<dbReference type="GO" id="GO:0015701">
    <property type="term" value="P:bicarbonate transport"/>
    <property type="evidence" value="ECO:0000314"/>
    <property type="project" value="UniProtKB"/>
</dbReference>
<dbReference type="GO" id="GO:0071320">
    <property type="term" value="P:cellular response to cAMP"/>
    <property type="evidence" value="ECO:0000250"/>
    <property type="project" value="UniProtKB"/>
</dbReference>
<dbReference type="GO" id="GO:0071332">
    <property type="term" value="P:cellular response to fructose stimulus"/>
    <property type="evidence" value="ECO:0000250"/>
    <property type="project" value="UniProtKB"/>
</dbReference>
<dbReference type="GO" id="GO:0071346">
    <property type="term" value="P:cellular response to type II interferon"/>
    <property type="evidence" value="ECO:0000314"/>
    <property type="project" value="UniProtKB"/>
</dbReference>
<dbReference type="GO" id="GO:1902476">
    <property type="term" value="P:chloride transmembrane transport"/>
    <property type="evidence" value="ECO:0000318"/>
    <property type="project" value="GO_Central"/>
</dbReference>
<dbReference type="GO" id="GO:0006821">
    <property type="term" value="P:chloride transport"/>
    <property type="evidence" value="ECO:0000314"/>
    <property type="project" value="UniProtKB"/>
</dbReference>
<dbReference type="GO" id="GO:0042045">
    <property type="term" value="P:epithelial fluid transport"/>
    <property type="evidence" value="ECO:0000250"/>
    <property type="project" value="UniProtKB"/>
</dbReference>
<dbReference type="GO" id="GO:0051649">
    <property type="term" value="P:establishment of localization in cell"/>
    <property type="evidence" value="ECO:0007669"/>
    <property type="project" value="Ensembl"/>
</dbReference>
<dbReference type="GO" id="GO:0044849">
    <property type="term" value="P:estrous cycle"/>
    <property type="evidence" value="ECO:0007669"/>
    <property type="project" value="Ensembl"/>
</dbReference>
<dbReference type="GO" id="GO:0015724">
    <property type="term" value="P:formate transport"/>
    <property type="evidence" value="ECO:0000250"/>
    <property type="project" value="UniProtKB"/>
</dbReference>
<dbReference type="GO" id="GO:0050892">
    <property type="term" value="P:intestinal absorption"/>
    <property type="evidence" value="ECO:0000250"/>
    <property type="project" value="UniProtKB"/>
</dbReference>
<dbReference type="GO" id="GO:0051454">
    <property type="term" value="P:intracellular pH elevation"/>
    <property type="evidence" value="ECO:0000250"/>
    <property type="project" value="UniProtKB"/>
</dbReference>
<dbReference type="GO" id="GO:0015797">
    <property type="term" value="P:mannitol transmembrane transport"/>
    <property type="evidence" value="ECO:0000250"/>
    <property type="project" value="UniProtKB"/>
</dbReference>
<dbReference type="GO" id="GO:0006811">
    <property type="term" value="P:monoatomic ion transport"/>
    <property type="evidence" value="ECO:0000304"/>
    <property type="project" value="Reactome"/>
</dbReference>
<dbReference type="GO" id="GO:0019532">
    <property type="term" value="P:oxalate transport"/>
    <property type="evidence" value="ECO:0000315"/>
    <property type="project" value="UniProtKB"/>
</dbReference>
<dbReference type="GO" id="GO:0046724">
    <property type="term" value="P:oxalic acid secretion"/>
    <property type="evidence" value="ECO:0000250"/>
    <property type="project" value="UniProtKB"/>
</dbReference>
<dbReference type="GO" id="GO:2001150">
    <property type="term" value="P:positive regulation of dipeptide transmembrane transport"/>
    <property type="evidence" value="ECO:0000250"/>
    <property type="project" value="UniProtKB"/>
</dbReference>
<dbReference type="GO" id="GO:0070528">
    <property type="term" value="P:protein kinase C signaling"/>
    <property type="evidence" value="ECO:0000314"/>
    <property type="project" value="UniProtKB"/>
</dbReference>
<dbReference type="GO" id="GO:0051453">
    <property type="term" value="P:regulation of intracellular pH"/>
    <property type="evidence" value="ECO:0000314"/>
    <property type="project" value="UniProtKB"/>
</dbReference>
<dbReference type="GO" id="GO:0048240">
    <property type="term" value="P:sperm capacitation"/>
    <property type="evidence" value="ECO:0000250"/>
    <property type="project" value="UniProtKB"/>
</dbReference>
<dbReference type="GO" id="GO:1902358">
    <property type="term" value="P:sulfate transmembrane transport"/>
    <property type="evidence" value="ECO:0000315"/>
    <property type="project" value="UniProtKB"/>
</dbReference>
<dbReference type="GO" id="GO:0030321">
    <property type="term" value="P:transepithelial chloride transport"/>
    <property type="evidence" value="ECO:0000315"/>
    <property type="project" value="UniProtKB"/>
</dbReference>
<dbReference type="GO" id="GO:0070633">
    <property type="term" value="P:transepithelial transport"/>
    <property type="evidence" value="ECO:0000250"/>
    <property type="project" value="UniProtKB"/>
</dbReference>
<dbReference type="CDD" id="cd07042">
    <property type="entry name" value="STAS_SulP_like_sulfate_transporter"/>
    <property type="match status" value="1"/>
</dbReference>
<dbReference type="Gene3D" id="3.30.750.24">
    <property type="entry name" value="STAS domain"/>
    <property type="match status" value="1"/>
</dbReference>
<dbReference type="InterPro" id="IPR018045">
    <property type="entry name" value="S04_transporter_CS"/>
</dbReference>
<dbReference type="InterPro" id="IPR011547">
    <property type="entry name" value="SLC26A/SulP_dom"/>
</dbReference>
<dbReference type="InterPro" id="IPR001902">
    <property type="entry name" value="SLC26A/SulP_fam"/>
</dbReference>
<dbReference type="InterPro" id="IPR002645">
    <property type="entry name" value="STAS_dom"/>
</dbReference>
<dbReference type="InterPro" id="IPR036513">
    <property type="entry name" value="STAS_dom_sf"/>
</dbReference>
<dbReference type="NCBIfam" id="TIGR00815">
    <property type="entry name" value="sulP"/>
    <property type="match status" value="1"/>
</dbReference>
<dbReference type="PANTHER" id="PTHR11814">
    <property type="entry name" value="SULFATE TRANSPORTER"/>
    <property type="match status" value="1"/>
</dbReference>
<dbReference type="Pfam" id="PF01740">
    <property type="entry name" value="STAS"/>
    <property type="match status" value="1"/>
</dbReference>
<dbReference type="Pfam" id="PF00916">
    <property type="entry name" value="Sulfate_transp"/>
    <property type="match status" value="1"/>
</dbReference>
<dbReference type="SUPFAM" id="SSF52091">
    <property type="entry name" value="SpoIIaa-like"/>
    <property type="match status" value="1"/>
</dbReference>
<dbReference type="PROSITE" id="PS01130">
    <property type="entry name" value="SLC26A"/>
    <property type="match status" value="1"/>
</dbReference>
<dbReference type="PROSITE" id="PS50801">
    <property type="entry name" value="STAS"/>
    <property type="match status" value="1"/>
</dbReference>